<accession>Q8PPP9</accession>
<evidence type="ECO:0000255" key="1">
    <source>
        <dbReference type="HAMAP-Rule" id="MF_01808"/>
    </source>
</evidence>
<evidence type="ECO:0000255" key="2">
    <source>
        <dbReference type="PROSITE-ProRule" id="PRU01246"/>
    </source>
</evidence>
<evidence type="ECO:0000255" key="3">
    <source>
        <dbReference type="PROSITE-ProRule" id="PRU01248"/>
    </source>
</evidence>
<organism>
    <name type="scientific">Xanthomonas axonopodis pv. citri (strain 306)</name>
    <dbReference type="NCBI Taxonomy" id="190486"/>
    <lineage>
        <taxon>Bacteria</taxon>
        <taxon>Pseudomonadati</taxon>
        <taxon>Pseudomonadota</taxon>
        <taxon>Gammaproteobacteria</taxon>
        <taxon>Lysobacterales</taxon>
        <taxon>Lysobacteraceae</taxon>
        <taxon>Xanthomonas</taxon>
    </lineage>
</organism>
<reference key="1">
    <citation type="journal article" date="2002" name="Nature">
        <title>Comparison of the genomes of two Xanthomonas pathogens with differing host specificities.</title>
        <authorList>
            <person name="da Silva A.C.R."/>
            <person name="Ferro J.A."/>
            <person name="Reinach F.C."/>
            <person name="Farah C.S."/>
            <person name="Furlan L.R."/>
            <person name="Quaggio R.B."/>
            <person name="Monteiro-Vitorello C.B."/>
            <person name="Van Sluys M.A."/>
            <person name="Almeida N.F. Jr."/>
            <person name="Alves L.M.C."/>
            <person name="do Amaral A.M."/>
            <person name="Bertolini M.C."/>
            <person name="Camargo L.E.A."/>
            <person name="Camarotte G."/>
            <person name="Cannavan F."/>
            <person name="Cardozo J."/>
            <person name="Chambergo F."/>
            <person name="Ciapina L.P."/>
            <person name="Cicarelli R.M.B."/>
            <person name="Coutinho L.L."/>
            <person name="Cursino-Santos J.R."/>
            <person name="El-Dorry H."/>
            <person name="Faria J.B."/>
            <person name="Ferreira A.J.S."/>
            <person name="Ferreira R.C.C."/>
            <person name="Ferro M.I.T."/>
            <person name="Formighieri E.F."/>
            <person name="Franco M.C."/>
            <person name="Greggio C.C."/>
            <person name="Gruber A."/>
            <person name="Katsuyama A.M."/>
            <person name="Kishi L.T."/>
            <person name="Leite R.P."/>
            <person name="Lemos E.G.M."/>
            <person name="Lemos M.V.F."/>
            <person name="Locali E.C."/>
            <person name="Machado M.A."/>
            <person name="Madeira A.M.B.N."/>
            <person name="Martinez-Rossi N.M."/>
            <person name="Martins E.C."/>
            <person name="Meidanis J."/>
            <person name="Menck C.F.M."/>
            <person name="Miyaki C.Y."/>
            <person name="Moon D.H."/>
            <person name="Moreira L.M."/>
            <person name="Novo M.T.M."/>
            <person name="Okura V.K."/>
            <person name="Oliveira M.C."/>
            <person name="Oliveira V.R."/>
            <person name="Pereira H.A."/>
            <person name="Rossi A."/>
            <person name="Sena J.A.D."/>
            <person name="Silva C."/>
            <person name="de Souza R.F."/>
            <person name="Spinola L.A.F."/>
            <person name="Takita M.A."/>
            <person name="Tamura R.E."/>
            <person name="Teixeira E.C."/>
            <person name="Tezza R.I.D."/>
            <person name="Trindade dos Santos M."/>
            <person name="Truffi D."/>
            <person name="Tsai S.M."/>
            <person name="White F.F."/>
            <person name="Setubal J.C."/>
            <person name="Kitajima J.P."/>
        </authorList>
    </citation>
    <scope>NUCLEOTIDE SEQUENCE [LARGE SCALE GENOMIC DNA]</scope>
    <source>
        <strain>306</strain>
    </source>
</reference>
<sequence>MSSVDEFLTYLQVERQVSAHTLDAYRRDLAALVVWASEQKTDDGVQDAAVPAETAQFDSAHLRQFVAAEHRRGLSAKSLQRRLSACRSYYAWLLKRGRISASPAAALRAPKAPRKLPQVLDADEAVRLVEVPTDAPLGLRDRALLEVFYSSGLRLSELCALRWRDLDLDSGLVMVLGKGSKQRLVPVGSHAIAALREWRRDSGASADSHVFPGRAGGAISQRAVQIRIKQLAVRQGMFKDVHPHMLRHSFASHILESSGDLRGVQELLGHSDIATTQIYTHLDFQHLAKVYDAAHPRARRKKAAE</sequence>
<comment type="function">
    <text evidence="1">Site-specific tyrosine recombinase, which acts by catalyzing the cutting and rejoining of the recombining DNA molecules. The XerC-XerD complex is essential to convert dimers of the bacterial chromosome into monomers to permit their segregation at cell division. It also contributes to the segregational stability of plasmids.</text>
</comment>
<comment type="subunit">
    <text evidence="1">Forms a cyclic heterotetrameric complex composed of two molecules of XerC and two molecules of XerD.</text>
</comment>
<comment type="subcellular location">
    <subcellularLocation>
        <location evidence="1">Cytoplasm</location>
    </subcellularLocation>
</comment>
<comment type="similarity">
    <text evidence="1">Belongs to the 'phage' integrase family. XerC subfamily.</text>
</comment>
<proteinExistence type="inferred from homology"/>
<dbReference type="EMBL" id="AE008923">
    <property type="protein sequence ID" value="AAM35525.1"/>
    <property type="molecule type" value="Genomic_DNA"/>
</dbReference>
<dbReference type="RefSeq" id="WP_003482764.1">
    <property type="nucleotide sequence ID" value="NC_003919.1"/>
</dbReference>
<dbReference type="SMR" id="Q8PPP9"/>
<dbReference type="GeneID" id="66909834"/>
<dbReference type="KEGG" id="xac:XAC0636"/>
<dbReference type="eggNOG" id="COG4973">
    <property type="taxonomic scope" value="Bacteria"/>
</dbReference>
<dbReference type="HOGENOM" id="CLU_027562_9_0_6"/>
<dbReference type="Proteomes" id="UP000000576">
    <property type="component" value="Chromosome"/>
</dbReference>
<dbReference type="GO" id="GO:0005737">
    <property type="term" value="C:cytoplasm"/>
    <property type="evidence" value="ECO:0007669"/>
    <property type="project" value="UniProtKB-SubCell"/>
</dbReference>
<dbReference type="GO" id="GO:0003677">
    <property type="term" value="F:DNA binding"/>
    <property type="evidence" value="ECO:0007669"/>
    <property type="project" value="UniProtKB-KW"/>
</dbReference>
<dbReference type="GO" id="GO:0009037">
    <property type="term" value="F:tyrosine-based site-specific recombinase activity"/>
    <property type="evidence" value="ECO:0007669"/>
    <property type="project" value="UniProtKB-UniRule"/>
</dbReference>
<dbReference type="GO" id="GO:0051301">
    <property type="term" value="P:cell division"/>
    <property type="evidence" value="ECO:0007669"/>
    <property type="project" value="UniProtKB-KW"/>
</dbReference>
<dbReference type="GO" id="GO:0007059">
    <property type="term" value="P:chromosome segregation"/>
    <property type="evidence" value="ECO:0007669"/>
    <property type="project" value="UniProtKB-UniRule"/>
</dbReference>
<dbReference type="GO" id="GO:0006313">
    <property type="term" value="P:DNA transposition"/>
    <property type="evidence" value="ECO:0007669"/>
    <property type="project" value="UniProtKB-UniRule"/>
</dbReference>
<dbReference type="CDD" id="cd00798">
    <property type="entry name" value="INT_XerDC_C"/>
    <property type="match status" value="1"/>
</dbReference>
<dbReference type="Gene3D" id="1.10.150.130">
    <property type="match status" value="1"/>
</dbReference>
<dbReference type="Gene3D" id="1.10.443.10">
    <property type="entry name" value="Intergrase catalytic core"/>
    <property type="match status" value="1"/>
</dbReference>
<dbReference type="HAMAP" id="MF_01808">
    <property type="entry name" value="Recomb_XerC_XerD"/>
    <property type="match status" value="1"/>
</dbReference>
<dbReference type="InterPro" id="IPR044068">
    <property type="entry name" value="CB"/>
</dbReference>
<dbReference type="InterPro" id="IPR011010">
    <property type="entry name" value="DNA_brk_join_enz"/>
</dbReference>
<dbReference type="InterPro" id="IPR013762">
    <property type="entry name" value="Integrase-like_cat_sf"/>
</dbReference>
<dbReference type="InterPro" id="IPR002104">
    <property type="entry name" value="Integrase_catalytic"/>
</dbReference>
<dbReference type="InterPro" id="IPR010998">
    <property type="entry name" value="Integrase_recombinase_N"/>
</dbReference>
<dbReference type="InterPro" id="IPR004107">
    <property type="entry name" value="Integrase_SAM-like_N"/>
</dbReference>
<dbReference type="InterPro" id="IPR011931">
    <property type="entry name" value="Recomb_XerC"/>
</dbReference>
<dbReference type="InterPro" id="IPR023009">
    <property type="entry name" value="Tyrosine_recombinase_XerC/XerD"/>
</dbReference>
<dbReference type="InterPro" id="IPR050090">
    <property type="entry name" value="Tyrosine_recombinase_XerCD"/>
</dbReference>
<dbReference type="NCBIfam" id="NF001399">
    <property type="entry name" value="PRK00283.1"/>
    <property type="match status" value="1"/>
</dbReference>
<dbReference type="NCBIfam" id="TIGR02224">
    <property type="entry name" value="recomb_XerC"/>
    <property type="match status" value="1"/>
</dbReference>
<dbReference type="PANTHER" id="PTHR30349">
    <property type="entry name" value="PHAGE INTEGRASE-RELATED"/>
    <property type="match status" value="1"/>
</dbReference>
<dbReference type="PANTHER" id="PTHR30349:SF81">
    <property type="entry name" value="TYROSINE RECOMBINASE XERC"/>
    <property type="match status" value="1"/>
</dbReference>
<dbReference type="Pfam" id="PF02899">
    <property type="entry name" value="Phage_int_SAM_1"/>
    <property type="match status" value="1"/>
</dbReference>
<dbReference type="Pfam" id="PF00589">
    <property type="entry name" value="Phage_integrase"/>
    <property type="match status" value="1"/>
</dbReference>
<dbReference type="SUPFAM" id="SSF56349">
    <property type="entry name" value="DNA breaking-rejoining enzymes"/>
    <property type="match status" value="1"/>
</dbReference>
<dbReference type="PROSITE" id="PS51900">
    <property type="entry name" value="CB"/>
    <property type="match status" value="1"/>
</dbReference>
<dbReference type="PROSITE" id="PS51898">
    <property type="entry name" value="TYR_RECOMBINASE"/>
    <property type="match status" value="1"/>
</dbReference>
<keyword id="KW-0131">Cell cycle</keyword>
<keyword id="KW-0132">Cell division</keyword>
<keyword id="KW-0159">Chromosome partition</keyword>
<keyword id="KW-0963">Cytoplasm</keyword>
<keyword id="KW-0229">DNA integration</keyword>
<keyword id="KW-0233">DNA recombination</keyword>
<keyword id="KW-0238">DNA-binding</keyword>
<feature type="chain" id="PRO_0000095347" description="Tyrosine recombinase XerC">
    <location>
        <begin position="1"/>
        <end position="305"/>
    </location>
</feature>
<feature type="domain" description="Core-binding (CB)" evidence="3">
    <location>
        <begin position="1"/>
        <end position="94"/>
    </location>
</feature>
<feature type="domain" description="Tyr recombinase" evidence="2">
    <location>
        <begin position="115"/>
        <end position="292"/>
    </location>
</feature>
<feature type="active site" evidence="1">
    <location>
        <position position="154"/>
    </location>
</feature>
<feature type="active site" evidence="1">
    <location>
        <position position="178"/>
    </location>
</feature>
<feature type="active site" evidence="1">
    <location>
        <position position="244"/>
    </location>
</feature>
<feature type="active site" evidence="1">
    <location>
        <position position="247"/>
    </location>
</feature>
<feature type="active site" evidence="1">
    <location>
        <position position="270"/>
    </location>
</feature>
<feature type="active site" description="O-(3'-phospho-DNA)-tyrosine intermediate" evidence="1">
    <location>
        <position position="279"/>
    </location>
</feature>
<protein>
    <recommendedName>
        <fullName evidence="1">Tyrosine recombinase XerC</fullName>
    </recommendedName>
</protein>
<gene>
    <name evidence="1" type="primary">xerC</name>
    <name type="ordered locus">XAC0636</name>
</gene>
<name>XERC_XANAC</name>